<organism>
    <name type="scientific">Streptomyces griseus subsp. griseus (strain JCM 4626 / CBS 651.72 / NBRC 13350 / KCC S-0626 / ISP 5235)</name>
    <dbReference type="NCBI Taxonomy" id="455632"/>
    <lineage>
        <taxon>Bacteria</taxon>
        <taxon>Bacillati</taxon>
        <taxon>Actinomycetota</taxon>
        <taxon>Actinomycetes</taxon>
        <taxon>Kitasatosporales</taxon>
        <taxon>Streptomycetaceae</taxon>
        <taxon>Streptomyces</taxon>
    </lineage>
</organism>
<protein>
    <recommendedName>
        <fullName evidence="1">Adenylate kinase</fullName>
        <shortName evidence="1">AK</shortName>
        <ecNumber evidence="1">2.7.4.3</ecNumber>
    </recommendedName>
    <alternativeName>
        <fullName evidence="1">ATP-AMP transphosphorylase</fullName>
    </alternativeName>
    <alternativeName>
        <fullName evidence="1">ATP:AMP phosphotransferase</fullName>
    </alternativeName>
    <alternativeName>
        <fullName evidence="1">Adenylate monophosphate kinase</fullName>
    </alternativeName>
</protein>
<sequence>MRIVLVGPPGAGKGTQAAYLAQNLSIPHIATGDLFRANISQGTDLGKQARAYMDAGQLVPDEVTIGMAKDRMAQADAAGGFLLDGFPRNVGQAEALDVMLKDEGVKLDAVLDLEVPEDEVVKRIAGRRVCRNNSAHVFHLTYNPPKAEGVCDACGGELYQRDDDSEETVRTRLEVYHTQTEPIIDYYRAQGLVVTISALGKVADVTARAMEALKASDEG</sequence>
<name>KAD_STRGG</name>
<proteinExistence type="inferred from homology"/>
<dbReference type="EC" id="2.7.4.3" evidence="1"/>
<dbReference type="EMBL" id="AP009493">
    <property type="protein sequence ID" value="BAG19642.1"/>
    <property type="molecule type" value="Genomic_DNA"/>
</dbReference>
<dbReference type="RefSeq" id="WP_012379459.1">
    <property type="nucleotide sequence ID" value="NC_010572.1"/>
</dbReference>
<dbReference type="SMR" id="B1W3Y6"/>
<dbReference type="KEGG" id="sgr:SGR_2813"/>
<dbReference type="PATRIC" id="fig|455632.4.peg.2875"/>
<dbReference type="eggNOG" id="COG0563">
    <property type="taxonomic scope" value="Bacteria"/>
</dbReference>
<dbReference type="HOGENOM" id="CLU_032354_1_2_11"/>
<dbReference type="UniPathway" id="UPA00588">
    <property type="reaction ID" value="UER00649"/>
</dbReference>
<dbReference type="Proteomes" id="UP000001685">
    <property type="component" value="Chromosome"/>
</dbReference>
<dbReference type="GO" id="GO:0005737">
    <property type="term" value="C:cytoplasm"/>
    <property type="evidence" value="ECO:0007669"/>
    <property type="project" value="UniProtKB-SubCell"/>
</dbReference>
<dbReference type="GO" id="GO:0004017">
    <property type="term" value="F:adenylate kinase activity"/>
    <property type="evidence" value="ECO:0007669"/>
    <property type="project" value="UniProtKB-UniRule"/>
</dbReference>
<dbReference type="GO" id="GO:0005524">
    <property type="term" value="F:ATP binding"/>
    <property type="evidence" value="ECO:0007669"/>
    <property type="project" value="UniProtKB-UniRule"/>
</dbReference>
<dbReference type="GO" id="GO:0044209">
    <property type="term" value="P:AMP salvage"/>
    <property type="evidence" value="ECO:0007669"/>
    <property type="project" value="UniProtKB-UniRule"/>
</dbReference>
<dbReference type="CDD" id="cd01428">
    <property type="entry name" value="ADK"/>
    <property type="match status" value="1"/>
</dbReference>
<dbReference type="FunFam" id="3.40.50.300:FF:000106">
    <property type="entry name" value="Adenylate kinase mitochondrial"/>
    <property type="match status" value="1"/>
</dbReference>
<dbReference type="Gene3D" id="3.40.50.300">
    <property type="entry name" value="P-loop containing nucleotide triphosphate hydrolases"/>
    <property type="match status" value="1"/>
</dbReference>
<dbReference type="HAMAP" id="MF_00235">
    <property type="entry name" value="Adenylate_kinase_Adk"/>
    <property type="match status" value="1"/>
</dbReference>
<dbReference type="InterPro" id="IPR006259">
    <property type="entry name" value="Adenyl_kin_sub"/>
</dbReference>
<dbReference type="InterPro" id="IPR000850">
    <property type="entry name" value="Adenylat/UMP-CMP_kin"/>
</dbReference>
<dbReference type="InterPro" id="IPR033690">
    <property type="entry name" value="Adenylat_kinase_CS"/>
</dbReference>
<dbReference type="InterPro" id="IPR007862">
    <property type="entry name" value="Adenylate_kinase_lid-dom"/>
</dbReference>
<dbReference type="InterPro" id="IPR027417">
    <property type="entry name" value="P-loop_NTPase"/>
</dbReference>
<dbReference type="NCBIfam" id="TIGR01351">
    <property type="entry name" value="adk"/>
    <property type="match status" value="1"/>
</dbReference>
<dbReference type="NCBIfam" id="NF001380">
    <property type="entry name" value="PRK00279.1-2"/>
    <property type="match status" value="1"/>
</dbReference>
<dbReference type="NCBIfam" id="NF001381">
    <property type="entry name" value="PRK00279.1-3"/>
    <property type="match status" value="1"/>
</dbReference>
<dbReference type="NCBIfam" id="NF011100">
    <property type="entry name" value="PRK14527.1"/>
    <property type="match status" value="1"/>
</dbReference>
<dbReference type="PANTHER" id="PTHR23359">
    <property type="entry name" value="NUCLEOTIDE KINASE"/>
    <property type="match status" value="1"/>
</dbReference>
<dbReference type="Pfam" id="PF00406">
    <property type="entry name" value="ADK"/>
    <property type="match status" value="1"/>
</dbReference>
<dbReference type="Pfam" id="PF05191">
    <property type="entry name" value="ADK_lid"/>
    <property type="match status" value="1"/>
</dbReference>
<dbReference type="PRINTS" id="PR00094">
    <property type="entry name" value="ADENYLTKNASE"/>
</dbReference>
<dbReference type="SUPFAM" id="SSF52540">
    <property type="entry name" value="P-loop containing nucleoside triphosphate hydrolases"/>
    <property type="match status" value="1"/>
</dbReference>
<dbReference type="PROSITE" id="PS00113">
    <property type="entry name" value="ADENYLATE_KINASE"/>
    <property type="match status" value="1"/>
</dbReference>
<evidence type="ECO:0000255" key="1">
    <source>
        <dbReference type="HAMAP-Rule" id="MF_00235"/>
    </source>
</evidence>
<reference key="1">
    <citation type="journal article" date="2008" name="J. Bacteriol.">
        <title>Genome sequence of the streptomycin-producing microorganism Streptomyces griseus IFO 13350.</title>
        <authorList>
            <person name="Ohnishi Y."/>
            <person name="Ishikawa J."/>
            <person name="Hara H."/>
            <person name="Suzuki H."/>
            <person name="Ikenoya M."/>
            <person name="Ikeda H."/>
            <person name="Yamashita A."/>
            <person name="Hattori M."/>
            <person name="Horinouchi S."/>
        </authorList>
    </citation>
    <scope>NUCLEOTIDE SEQUENCE [LARGE SCALE GENOMIC DNA]</scope>
    <source>
        <strain>JCM 4626 / CBS 651.72 / NBRC 13350 / KCC S-0626 / ISP 5235</strain>
    </source>
</reference>
<gene>
    <name evidence="1" type="primary">adk</name>
    <name type="ordered locus">SGR_2813</name>
</gene>
<comment type="function">
    <text evidence="1">Catalyzes the reversible transfer of the terminal phosphate group between ATP and AMP. Plays an important role in cellular energy homeostasis and in adenine nucleotide metabolism.</text>
</comment>
<comment type="catalytic activity">
    <reaction evidence="1">
        <text>AMP + ATP = 2 ADP</text>
        <dbReference type="Rhea" id="RHEA:12973"/>
        <dbReference type="ChEBI" id="CHEBI:30616"/>
        <dbReference type="ChEBI" id="CHEBI:456215"/>
        <dbReference type="ChEBI" id="CHEBI:456216"/>
        <dbReference type="EC" id="2.7.4.3"/>
    </reaction>
</comment>
<comment type="pathway">
    <text evidence="1">Purine metabolism; AMP biosynthesis via salvage pathway; AMP from ADP: step 1/1.</text>
</comment>
<comment type="subunit">
    <text evidence="1">Monomer.</text>
</comment>
<comment type="subcellular location">
    <subcellularLocation>
        <location evidence="1">Cytoplasm</location>
    </subcellularLocation>
</comment>
<comment type="domain">
    <text evidence="1">Consists of three domains, a large central CORE domain and two small peripheral domains, NMPbind and LID, which undergo movements during catalysis. The LID domain closes over the site of phosphoryl transfer upon ATP binding. Assembling and dissambling the active center during each catalytic cycle provides an effective means to prevent ATP hydrolysis.</text>
</comment>
<comment type="similarity">
    <text evidence="1">Belongs to the adenylate kinase family.</text>
</comment>
<accession>B1W3Y6</accession>
<feature type="chain" id="PRO_1000100610" description="Adenylate kinase">
    <location>
        <begin position="1"/>
        <end position="219"/>
    </location>
</feature>
<feature type="region of interest" description="NMP" evidence="1">
    <location>
        <begin position="30"/>
        <end position="59"/>
    </location>
</feature>
<feature type="region of interest" description="LID" evidence="1">
    <location>
        <begin position="126"/>
        <end position="164"/>
    </location>
</feature>
<feature type="binding site" evidence="1">
    <location>
        <begin position="10"/>
        <end position="15"/>
    </location>
    <ligand>
        <name>ATP</name>
        <dbReference type="ChEBI" id="CHEBI:30616"/>
    </ligand>
</feature>
<feature type="binding site" evidence="1">
    <location>
        <position position="31"/>
    </location>
    <ligand>
        <name>AMP</name>
        <dbReference type="ChEBI" id="CHEBI:456215"/>
    </ligand>
</feature>
<feature type="binding site" evidence="1">
    <location>
        <position position="36"/>
    </location>
    <ligand>
        <name>AMP</name>
        <dbReference type="ChEBI" id="CHEBI:456215"/>
    </ligand>
</feature>
<feature type="binding site" evidence="1">
    <location>
        <begin position="57"/>
        <end position="59"/>
    </location>
    <ligand>
        <name>AMP</name>
        <dbReference type="ChEBI" id="CHEBI:456215"/>
    </ligand>
</feature>
<feature type="binding site" evidence="1">
    <location>
        <begin position="85"/>
        <end position="88"/>
    </location>
    <ligand>
        <name>AMP</name>
        <dbReference type="ChEBI" id="CHEBI:456215"/>
    </ligand>
</feature>
<feature type="binding site" evidence="1">
    <location>
        <position position="92"/>
    </location>
    <ligand>
        <name>AMP</name>
        <dbReference type="ChEBI" id="CHEBI:456215"/>
    </ligand>
</feature>
<feature type="binding site" evidence="1">
    <location>
        <position position="127"/>
    </location>
    <ligand>
        <name>ATP</name>
        <dbReference type="ChEBI" id="CHEBI:30616"/>
    </ligand>
</feature>
<feature type="binding site" evidence="1">
    <location>
        <begin position="137"/>
        <end position="138"/>
    </location>
    <ligand>
        <name>ATP</name>
        <dbReference type="ChEBI" id="CHEBI:30616"/>
    </ligand>
</feature>
<feature type="binding site" evidence="1">
    <location>
        <position position="161"/>
    </location>
    <ligand>
        <name>AMP</name>
        <dbReference type="ChEBI" id="CHEBI:456215"/>
    </ligand>
</feature>
<feature type="binding site" evidence="1">
    <location>
        <position position="172"/>
    </location>
    <ligand>
        <name>AMP</name>
        <dbReference type="ChEBI" id="CHEBI:456215"/>
    </ligand>
</feature>
<feature type="binding site" evidence="1">
    <location>
        <position position="200"/>
    </location>
    <ligand>
        <name>ATP</name>
        <dbReference type="ChEBI" id="CHEBI:30616"/>
    </ligand>
</feature>
<keyword id="KW-0067">ATP-binding</keyword>
<keyword id="KW-0963">Cytoplasm</keyword>
<keyword id="KW-0418">Kinase</keyword>
<keyword id="KW-0545">Nucleotide biosynthesis</keyword>
<keyword id="KW-0547">Nucleotide-binding</keyword>
<keyword id="KW-0808">Transferase</keyword>